<protein>
    <recommendedName>
        <fullName evidence="7">Peroxidase 15</fullName>
        <shortName evidence="7">Prx15</shortName>
        <ecNumber>1.11.1.7</ecNumber>
    </recommendedName>
    <alternativeName>
        <fullName evidence="7">Anionic peroxidase</fullName>
    </alternativeName>
</protein>
<feature type="signal peptide" evidence="3">
    <location>
        <begin position="1"/>
        <end position="23"/>
    </location>
</feature>
<feature type="chain" id="PRO_5000065280" description="Peroxidase 15">
    <location>
        <begin position="24"/>
        <end position="327"/>
    </location>
</feature>
<feature type="active site" description="Proton acceptor" evidence="2 4 5">
    <location>
        <position position="65"/>
    </location>
</feature>
<feature type="binding site" evidence="2 4">
    <location>
        <position position="66"/>
    </location>
    <ligand>
        <name>Ca(2+)</name>
        <dbReference type="ChEBI" id="CHEBI:29108"/>
        <label>1</label>
    </ligand>
</feature>
<feature type="binding site" evidence="2 4">
    <location>
        <position position="69"/>
    </location>
    <ligand>
        <name>Ca(2+)</name>
        <dbReference type="ChEBI" id="CHEBI:29108"/>
        <label>1</label>
    </ligand>
</feature>
<feature type="binding site" evidence="2 4">
    <location>
        <position position="71"/>
    </location>
    <ligand>
        <name>Ca(2+)</name>
        <dbReference type="ChEBI" id="CHEBI:29108"/>
        <label>1</label>
    </ligand>
</feature>
<feature type="binding site" evidence="2 4">
    <location>
        <position position="73"/>
    </location>
    <ligand>
        <name>Ca(2+)</name>
        <dbReference type="ChEBI" id="CHEBI:29108"/>
        <label>1</label>
    </ligand>
</feature>
<feature type="binding site" evidence="2 4">
    <location>
        <position position="75"/>
    </location>
    <ligand>
        <name>Ca(2+)</name>
        <dbReference type="ChEBI" id="CHEBI:29108"/>
        <label>1</label>
    </ligand>
</feature>
<feature type="binding site" evidence="2 4">
    <location>
        <position position="163"/>
    </location>
    <ligand>
        <name>substrate</name>
    </ligand>
</feature>
<feature type="binding site" description="axial binding residue" evidence="1 4">
    <location>
        <position position="193"/>
    </location>
    <ligand>
        <name>heme b</name>
        <dbReference type="ChEBI" id="CHEBI:60344"/>
    </ligand>
    <ligandPart>
        <name>Fe</name>
        <dbReference type="ChEBI" id="CHEBI:18248"/>
    </ligandPart>
</feature>
<feature type="binding site" evidence="2 4">
    <location>
        <position position="194"/>
    </location>
    <ligand>
        <name>Ca(2+)</name>
        <dbReference type="ChEBI" id="CHEBI:29108"/>
        <label>2</label>
    </ligand>
</feature>
<feature type="binding site" evidence="2 4">
    <location>
        <position position="245"/>
    </location>
    <ligand>
        <name>Ca(2+)</name>
        <dbReference type="ChEBI" id="CHEBI:29108"/>
        <label>2</label>
    </ligand>
</feature>
<feature type="binding site" evidence="2 4">
    <location>
        <position position="248"/>
    </location>
    <ligand>
        <name>Ca(2+)</name>
        <dbReference type="ChEBI" id="CHEBI:29108"/>
        <label>2</label>
    </ligand>
</feature>
<feature type="binding site" evidence="2 4">
    <location>
        <position position="253"/>
    </location>
    <ligand>
        <name>Ca(2+)</name>
        <dbReference type="ChEBI" id="CHEBI:29108"/>
        <label>2</label>
    </ligand>
</feature>
<feature type="site" description="Transition state stabilizer" evidence="2 4">
    <location>
        <position position="61"/>
    </location>
</feature>
<feature type="modified residue" description="Pyrrolidone carboxylic acid" evidence="2 4">
    <location>
        <position position="24"/>
    </location>
</feature>
<feature type="glycosylation site" description="N-linked (GlcNAc...) asparagine" evidence="3">
    <location>
        <position position="36"/>
    </location>
</feature>
<feature type="glycosylation site" description="N-linked (GlcNAc...) asparagine" evidence="3">
    <location>
        <position position="81"/>
    </location>
</feature>
<feature type="glycosylation site" description="N-linked (GlcNAc...) asparagine" evidence="3">
    <location>
        <position position="96"/>
    </location>
</feature>
<feature type="glycosylation site" description="N-linked (GlcNAc...) asparagine" evidence="3">
    <location>
        <position position="159"/>
    </location>
</feature>
<feature type="glycosylation site" description="N-linked (GlcNAc...) asparagine" evidence="3">
    <location>
        <position position="168"/>
    </location>
</feature>
<feature type="glycosylation site" description="N-linked (GlcNAc...) asparagine" evidence="3">
    <location>
        <position position="171"/>
    </location>
</feature>
<feature type="glycosylation site" description="N-linked (GlcNAc...) asparagine" evidence="3">
    <location>
        <position position="209"/>
    </location>
</feature>
<feature type="glycosylation site" description="N-linked (GlcNAc...) asparagine" evidence="3">
    <location>
        <position position="221"/>
    </location>
</feature>
<feature type="glycosylation site" description="N-linked (GlcNAc...) asparagine" evidence="3">
    <location>
        <position position="287"/>
    </location>
</feature>
<feature type="glycosylation site" description="N-linked (GlcNAc...) asparagine" evidence="3">
    <location>
        <position position="291"/>
    </location>
</feature>
<feature type="disulfide bond" evidence="1 4">
    <location>
        <begin position="34"/>
        <end position="115"/>
    </location>
</feature>
<feature type="disulfide bond" evidence="1 4">
    <location>
        <begin position="67"/>
        <end position="72"/>
    </location>
</feature>
<feature type="disulfide bond" evidence="1 4">
    <location>
        <begin position="121"/>
        <end position="323"/>
    </location>
</feature>
<feature type="disulfide bond" evidence="1 4">
    <location>
        <begin position="200"/>
        <end position="232"/>
    </location>
</feature>
<comment type="function">
    <text evidence="8">Removal of H(2)O(2), oxidation of toxic reductants, biosynthesis and degradation of lignin, suberization, auxin catabolism, response to environmental stresses such as wounding, pathogen attack and oxidative stress. These functions might be dependent on each isozyme/isoform in each plant tissue.</text>
</comment>
<comment type="catalytic activity">
    <reaction evidence="6">
        <text>2 a phenolic donor + H2O2 = 2 a phenolic radical donor + 2 H2O</text>
        <dbReference type="Rhea" id="RHEA:56136"/>
        <dbReference type="ChEBI" id="CHEBI:15377"/>
        <dbReference type="ChEBI" id="CHEBI:16240"/>
        <dbReference type="ChEBI" id="CHEBI:139520"/>
        <dbReference type="ChEBI" id="CHEBI:139521"/>
        <dbReference type="EC" id="1.11.1.7"/>
    </reaction>
</comment>
<comment type="cofactor">
    <cofactor evidence="2 4">
        <name>Ca(2+)</name>
        <dbReference type="ChEBI" id="CHEBI:29108"/>
    </cofactor>
    <text evidence="2 4">Binds 2 calcium ions per subunit.</text>
</comment>
<comment type="cofactor">
    <cofactor evidence="2 4 6">
        <name>heme b</name>
        <dbReference type="ChEBI" id="CHEBI:60344"/>
    </cofactor>
    <text evidence="2 4 6">Binds 1 heme b (iron(II)-protoporphyrin IX) group per subunit.</text>
</comment>
<comment type="biophysicochemical properties">
    <absorption>
        <max evidence="6">408 nm</max>
        <text evidence="6">Exhibits smaller absorbance peaks at 497 and 635 nm. After treatment with stoichiometric amounts of hydrogen peroxide the absorption maximum is shifed to 400 nm.</text>
    </absorption>
    <phDependence>
        <text evidence="6">Optimum pH is 5.5. Retains more than 50% of activity between pH 4 and 7.</text>
    </phDependence>
</comment>
<comment type="subcellular location">
    <subcellularLocation>
        <location evidence="2 4">Secreted</location>
    </subcellularLocation>
</comment>
<comment type="mass spectrometry">
    <text>The measured mass is that of the phosphorylated and glycosylated protein.</text>
</comment>
<comment type="similarity">
    <text evidence="4">Belongs to the peroxidase family. Classical plant (class III) peroxidase subfamily.</text>
</comment>
<dbReference type="EC" id="1.11.1.7"/>
<dbReference type="EMBL" id="AJ242742">
    <property type="protein sequence ID" value="CAB94692.1"/>
    <property type="molecule type" value="mRNA"/>
</dbReference>
<dbReference type="SMR" id="Q9LEH3"/>
<dbReference type="PeroxiBase" id="296">
    <property type="entry name" value="IbPrx15"/>
</dbReference>
<dbReference type="GlyCosmos" id="Q9LEH3">
    <property type="glycosylation" value="10 sites, No reported glycans"/>
</dbReference>
<dbReference type="BRENDA" id="1.11.1.7">
    <property type="organism ID" value="2773"/>
</dbReference>
<dbReference type="GO" id="GO:0005576">
    <property type="term" value="C:extracellular region"/>
    <property type="evidence" value="ECO:0007669"/>
    <property type="project" value="UniProtKB-SubCell"/>
</dbReference>
<dbReference type="GO" id="GO:0020037">
    <property type="term" value="F:heme binding"/>
    <property type="evidence" value="ECO:0000314"/>
    <property type="project" value="UniProtKB"/>
</dbReference>
<dbReference type="GO" id="GO:0140825">
    <property type="term" value="F:lactoperoxidase activity"/>
    <property type="evidence" value="ECO:0007669"/>
    <property type="project" value="UniProtKB-EC"/>
</dbReference>
<dbReference type="GO" id="GO:0046872">
    <property type="term" value="F:metal ion binding"/>
    <property type="evidence" value="ECO:0007669"/>
    <property type="project" value="UniProtKB-KW"/>
</dbReference>
<dbReference type="GO" id="GO:0004601">
    <property type="term" value="F:peroxidase activity"/>
    <property type="evidence" value="ECO:0000314"/>
    <property type="project" value="UniProtKB"/>
</dbReference>
<dbReference type="GO" id="GO:0042744">
    <property type="term" value="P:hydrogen peroxide catabolic process"/>
    <property type="evidence" value="ECO:0007669"/>
    <property type="project" value="UniProtKB-KW"/>
</dbReference>
<dbReference type="GO" id="GO:0006979">
    <property type="term" value="P:response to oxidative stress"/>
    <property type="evidence" value="ECO:0007669"/>
    <property type="project" value="InterPro"/>
</dbReference>
<dbReference type="CDD" id="cd00693">
    <property type="entry name" value="secretory_peroxidase"/>
    <property type="match status" value="1"/>
</dbReference>
<dbReference type="FunFam" id="1.10.420.10:FF:000001">
    <property type="entry name" value="Peroxidase"/>
    <property type="match status" value="1"/>
</dbReference>
<dbReference type="FunFam" id="1.10.520.10:FF:000009">
    <property type="entry name" value="Peroxidase"/>
    <property type="match status" value="1"/>
</dbReference>
<dbReference type="Gene3D" id="1.10.520.10">
    <property type="match status" value="1"/>
</dbReference>
<dbReference type="Gene3D" id="1.10.420.10">
    <property type="entry name" value="Peroxidase, domain 2"/>
    <property type="match status" value="1"/>
</dbReference>
<dbReference type="InterPro" id="IPR002016">
    <property type="entry name" value="Haem_peroxidase"/>
</dbReference>
<dbReference type="InterPro" id="IPR010255">
    <property type="entry name" value="Haem_peroxidase_sf"/>
</dbReference>
<dbReference type="InterPro" id="IPR000823">
    <property type="entry name" value="Peroxidase_pln"/>
</dbReference>
<dbReference type="InterPro" id="IPR019794">
    <property type="entry name" value="Peroxidases_AS"/>
</dbReference>
<dbReference type="InterPro" id="IPR019793">
    <property type="entry name" value="Peroxidases_heam-ligand_BS"/>
</dbReference>
<dbReference type="InterPro" id="IPR033905">
    <property type="entry name" value="Secretory_peroxidase"/>
</dbReference>
<dbReference type="PANTHER" id="PTHR31388:SF139">
    <property type="entry name" value="PEROXIDASE 53"/>
    <property type="match status" value="1"/>
</dbReference>
<dbReference type="PANTHER" id="PTHR31388">
    <property type="entry name" value="PEROXIDASE 72-RELATED"/>
    <property type="match status" value="1"/>
</dbReference>
<dbReference type="Pfam" id="PF00141">
    <property type="entry name" value="peroxidase"/>
    <property type="match status" value="1"/>
</dbReference>
<dbReference type="PRINTS" id="PR00458">
    <property type="entry name" value="PEROXIDASE"/>
</dbReference>
<dbReference type="PRINTS" id="PR00461">
    <property type="entry name" value="PLPEROXIDASE"/>
</dbReference>
<dbReference type="SUPFAM" id="SSF48113">
    <property type="entry name" value="Heme-dependent peroxidases"/>
    <property type="match status" value="1"/>
</dbReference>
<dbReference type="PROSITE" id="PS00435">
    <property type="entry name" value="PEROXIDASE_1"/>
    <property type="match status" value="1"/>
</dbReference>
<dbReference type="PROSITE" id="PS00436">
    <property type="entry name" value="PEROXIDASE_2"/>
    <property type="match status" value="1"/>
</dbReference>
<dbReference type="PROSITE" id="PS50873">
    <property type="entry name" value="PEROXIDASE_4"/>
    <property type="match status" value="1"/>
</dbReference>
<accession>Q9LEH3</accession>
<keyword id="KW-0106">Calcium</keyword>
<keyword id="KW-0903">Direct protein sequencing</keyword>
<keyword id="KW-1015">Disulfide bond</keyword>
<keyword id="KW-0325">Glycoprotein</keyword>
<keyword id="KW-0349">Heme</keyword>
<keyword id="KW-0376">Hydrogen peroxide</keyword>
<keyword id="KW-0408">Iron</keyword>
<keyword id="KW-0479">Metal-binding</keyword>
<keyword id="KW-0560">Oxidoreductase</keyword>
<keyword id="KW-0575">Peroxidase</keyword>
<keyword id="KW-0873">Pyrrolidone carboxylic acid</keyword>
<keyword id="KW-0964">Secreted</keyword>
<keyword id="KW-0732">Signal</keyword>
<proteinExistence type="evidence at protein level"/>
<evidence type="ECO:0000250" key="1">
    <source>
        <dbReference type="UniProtKB" id="P00433"/>
    </source>
</evidence>
<evidence type="ECO:0000250" key="2">
    <source>
        <dbReference type="UniProtKB" id="Q42578"/>
    </source>
</evidence>
<evidence type="ECO:0000255" key="3"/>
<evidence type="ECO:0000255" key="4">
    <source>
        <dbReference type="PROSITE-ProRule" id="PRU00297"/>
    </source>
</evidence>
<evidence type="ECO:0000255" key="5">
    <source>
        <dbReference type="PROSITE-ProRule" id="PRU10012"/>
    </source>
</evidence>
<evidence type="ECO:0000269" key="6">
    <source>
    </source>
</evidence>
<evidence type="ECO:0000303" key="7">
    <source>
    </source>
</evidence>
<evidence type="ECO:0000305" key="8"/>
<evidence type="ECO:0000312" key="9">
    <source>
        <dbReference type="EMBL" id="CAB94692.1"/>
    </source>
</evidence>
<sequence>MASFSPLLAMALAIFIFSSHSNAQLSSTFYSTTCPNVSAIVRTVVQQALQNDARIGGSLIRLHFHDCFVDGCDGSLLLDNNGTTIVSEKDALPNTNSTRGFDVVDNIKTAVENACPGVVSCVDILALASESSVSLAGGPSWNVLLGRRDRRTANQGGANTSLPSPFENLTNLTQKFTNVGLNVNDLVALSGAHTFGRAQCRTFSPRLFNFSNTGNPDPTLNTTYLATLQQICPQGGSGFTVTNLDPTTPDTFDNNYFSNLQTNRGLLQSDQELFSTSGAPTIAIVNNFSANQTAFFESFVQSMINMGNISPLTGSNGEIRSNCRRPN</sequence>
<organism>
    <name type="scientific">Ipomoea batatas</name>
    <name type="common">Sweet potato</name>
    <name type="synonym">Convolvulus batatas</name>
    <dbReference type="NCBI Taxonomy" id="4120"/>
    <lineage>
        <taxon>Eukaryota</taxon>
        <taxon>Viridiplantae</taxon>
        <taxon>Streptophyta</taxon>
        <taxon>Embryophyta</taxon>
        <taxon>Tracheophyta</taxon>
        <taxon>Spermatophyta</taxon>
        <taxon>Magnoliopsida</taxon>
        <taxon>eudicotyledons</taxon>
        <taxon>Gunneridae</taxon>
        <taxon>Pentapetalae</taxon>
        <taxon>asterids</taxon>
        <taxon>lamiids</taxon>
        <taxon>Solanales</taxon>
        <taxon>Convolvulaceae</taxon>
        <taxon>Ipomoeeae</taxon>
        <taxon>Ipomoea</taxon>
    </lineage>
</organism>
<gene>
    <name evidence="9" type="primary">pod</name>
</gene>
<reference evidence="8 9" key="1">
    <citation type="journal article" date="2007" name="Biochim. Biophys. Acta">
        <title>Purification, cloning and characterization of a novel peroxidase isozyme from sweetpotatoes (Ipomoea batatas).</title>
        <authorList>
            <person name="Rompel A."/>
            <person name="Albers M."/>
            <person name="Naseri J.I."/>
            <person name="Gerdemann C."/>
            <person name="Bueldt-Karentzopoulos K.B."/>
            <person name="Jasper B."/>
            <person name="Krebs B."/>
        </authorList>
    </citation>
    <scope>NUCLEOTIDE SEQUENCE [MRNA]</scope>
    <scope>PROTEIN SEQUENCE OF 89-98; 131-163 AND 303-327</scope>
    <scope>CATALYTIC ACTIVITY</scope>
    <scope>COFACTOR</scope>
    <scope>BIOPHYSICOCHEMICAL PROPERTIES</scope>
    <scope>MASS SPECTROMETRY</scope>
    <source>
        <tissue evidence="6">Tuber</tissue>
    </source>
</reference>
<name>PER15_IPOBA</name>